<gene>
    <name evidence="1" type="primary">groES</name>
    <name evidence="1" type="synonym">groS</name>
    <name type="ordered locus">XAC0541</name>
</gene>
<dbReference type="EMBL" id="AE008923">
    <property type="protein sequence ID" value="AAM35430.1"/>
    <property type="molecule type" value="Genomic_DNA"/>
</dbReference>
<dbReference type="RefSeq" id="WP_003483210.1">
    <property type="nucleotide sequence ID" value="NC_003919.1"/>
</dbReference>
<dbReference type="SMR" id="P0A0R5"/>
<dbReference type="KEGG" id="xac:XAC0541"/>
<dbReference type="eggNOG" id="COG0234">
    <property type="taxonomic scope" value="Bacteria"/>
</dbReference>
<dbReference type="HOGENOM" id="CLU_132825_2_0_6"/>
<dbReference type="Proteomes" id="UP000000576">
    <property type="component" value="Chromosome"/>
</dbReference>
<dbReference type="GO" id="GO:0005737">
    <property type="term" value="C:cytoplasm"/>
    <property type="evidence" value="ECO:0007669"/>
    <property type="project" value="UniProtKB-SubCell"/>
</dbReference>
<dbReference type="GO" id="GO:0005524">
    <property type="term" value="F:ATP binding"/>
    <property type="evidence" value="ECO:0007669"/>
    <property type="project" value="InterPro"/>
</dbReference>
<dbReference type="GO" id="GO:0046872">
    <property type="term" value="F:metal ion binding"/>
    <property type="evidence" value="ECO:0007669"/>
    <property type="project" value="TreeGrafter"/>
</dbReference>
<dbReference type="GO" id="GO:0044183">
    <property type="term" value="F:protein folding chaperone"/>
    <property type="evidence" value="ECO:0007669"/>
    <property type="project" value="InterPro"/>
</dbReference>
<dbReference type="GO" id="GO:0051087">
    <property type="term" value="F:protein-folding chaperone binding"/>
    <property type="evidence" value="ECO:0007669"/>
    <property type="project" value="TreeGrafter"/>
</dbReference>
<dbReference type="GO" id="GO:0051082">
    <property type="term" value="F:unfolded protein binding"/>
    <property type="evidence" value="ECO:0007669"/>
    <property type="project" value="TreeGrafter"/>
</dbReference>
<dbReference type="GO" id="GO:0051085">
    <property type="term" value="P:chaperone cofactor-dependent protein refolding"/>
    <property type="evidence" value="ECO:0007669"/>
    <property type="project" value="TreeGrafter"/>
</dbReference>
<dbReference type="CDD" id="cd00320">
    <property type="entry name" value="cpn10"/>
    <property type="match status" value="1"/>
</dbReference>
<dbReference type="FunFam" id="2.30.33.40:FF:000001">
    <property type="entry name" value="10 kDa chaperonin"/>
    <property type="match status" value="1"/>
</dbReference>
<dbReference type="Gene3D" id="2.30.33.40">
    <property type="entry name" value="GroES chaperonin"/>
    <property type="match status" value="1"/>
</dbReference>
<dbReference type="HAMAP" id="MF_00580">
    <property type="entry name" value="CH10"/>
    <property type="match status" value="1"/>
</dbReference>
<dbReference type="InterPro" id="IPR020818">
    <property type="entry name" value="Chaperonin_GroES"/>
</dbReference>
<dbReference type="InterPro" id="IPR037124">
    <property type="entry name" value="Chaperonin_GroES_sf"/>
</dbReference>
<dbReference type="InterPro" id="IPR018369">
    <property type="entry name" value="Chaprnonin_Cpn10_CS"/>
</dbReference>
<dbReference type="InterPro" id="IPR011032">
    <property type="entry name" value="GroES-like_sf"/>
</dbReference>
<dbReference type="NCBIfam" id="NF001527">
    <property type="entry name" value="PRK00364.1-2"/>
    <property type="match status" value="1"/>
</dbReference>
<dbReference type="NCBIfam" id="NF001531">
    <property type="entry name" value="PRK00364.2-2"/>
    <property type="match status" value="1"/>
</dbReference>
<dbReference type="NCBIfam" id="NF001533">
    <property type="entry name" value="PRK00364.2-4"/>
    <property type="match status" value="1"/>
</dbReference>
<dbReference type="PANTHER" id="PTHR10772">
    <property type="entry name" value="10 KDA HEAT SHOCK PROTEIN"/>
    <property type="match status" value="1"/>
</dbReference>
<dbReference type="PANTHER" id="PTHR10772:SF58">
    <property type="entry name" value="CO-CHAPERONIN GROES"/>
    <property type="match status" value="1"/>
</dbReference>
<dbReference type="Pfam" id="PF00166">
    <property type="entry name" value="Cpn10"/>
    <property type="match status" value="1"/>
</dbReference>
<dbReference type="PRINTS" id="PR00297">
    <property type="entry name" value="CHAPERONIN10"/>
</dbReference>
<dbReference type="SMART" id="SM00883">
    <property type="entry name" value="Cpn10"/>
    <property type="match status" value="1"/>
</dbReference>
<dbReference type="SUPFAM" id="SSF50129">
    <property type="entry name" value="GroES-like"/>
    <property type="match status" value="1"/>
</dbReference>
<dbReference type="PROSITE" id="PS00681">
    <property type="entry name" value="CHAPERONINS_CPN10"/>
    <property type="match status" value="1"/>
</dbReference>
<sequence>MSIKPLHDRVVVKPIEADEVSAGGIVIPDSAKEKSTKGEVVAIGAGKPLDNGSLRAPVVKVGDKVIYGQYAGSSYKSEGVEYKVLREDDILAVIG</sequence>
<feature type="chain" id="PRO_0000174903" description="Co-chaperonin GroES">
    <location>
        <begin position="1"/>
        <end position="95"/>
    </location>
</feature>
<name>CH10_XANAC</name>
<accession>P0A0R5</accession>
<accession>Q8RIT8</accession>
<keyword id="KW-0143">Chaperone</keyword>
<keyword id="KW-0963">Cytoplasm</keyword>
<comment type="function">
    <text evidence="1">Together with the chaperonin GroEL, plays an essential role in assisting protein folding. The GroEL-GroES system forms a nano-cage that allows encapsulation of the non-native substrate proteins and provides a physical environment optimized to promote and accelerate protein folding. GroES binds to the apical surface of the GroEL ring, thereby capping the opening of the GroEL channel.</text>
</comment>
<comment type="subunit">
    <text evidence="1">Heptamer of 7 subunits arranged in a ring. Interacts with the chaperonin GroEL.</text>
</comment>
<comment type="subcellular location">
    <subcellularLocation>
        <location evidence="1">Cytoplasm</location>
    </subcellularLocation>
</comment>
<comment type="similarity">
    <text evidence="1">Belongs to the GroES chaperonin family.</text>
</comment>
<proteinExistence type="inferred from homology"/>
<reference key="1">
    <citation type="journal article" date="2002" name="Nature">
        <title>Comparison of the genomes of two Xanthomonas pathogens with differing host specificities.</title>
        <authorList>
            <person name="da Silva A.C.R."/>
            <person name="Ferro J.A."/>
            <person name="Reinach F.C."/>
            <person name="Farah C.S."/>
            <person name="Furlan L.R."/>
            <person name="Quaggio R.B."/>
            <person name="Monteiro-Vitorello C.B."/>
            <person name="Van Sluys M.A."/>
            <person name="Almeida N.F. Jr."/>
            <person name="Alves L.M.C."/>
            <person name="do Amaral A.M."/>
            <person name="Bertolini M.C."/>
            <person name="Camargo L.E.A."/>
            <person name="Camarotte G."/>
            <person name="Cannavan F."/>
            <person name="Cardozo J."/>
            <person name="Chambergo F."/>
            <person name="Ciapina L.P."/>
            <person name="Cicarelli R.M.B."/>
            <person name="Coutinho L.L."/>
            <person name="Cursino-Santos J.R."/>
            <person name="El-Dorry H."/>
            <person name="Faria J.B."/>
            <person name="Ferreira A.J.S."/>
            <person name="Ferreira R.C.C."/>
            <person name="Ferro M.I.T."/>
            <person name="Formighieri E.F."/>
            <person name="Franco M.C."/>
            <person name="Greggio C.C."/>
            <person name="Gruber A."/>
            <person name="Katsuyama A.M."/>
            <person name="Kishi L.T."/>
            <person name="Leite R.P."/>
            <person name="Lemos E.G.M."/>
            <person name="Lemos M.V.F."/>
            <person name="Locali E.C."/>
            <person name="Machado M.A."/>
            <person name="Madeira A.M.B.N."/>
            <person name="Martinez-Rossi N.M."/>
            <person name="Martins E.C."/>
            <person name="Meidanis J."/>
            <person name="Menck C.F.M."/>
            <person name="Miyaki C.Y."/>
            <person name="Moon D.H."/>
            <person name="Moreira L.M."/>
            <person name="Novo M.T.M."/>
            <person name="Okura V.K."/>
            <person name="Oliveira M.C."/>
            <person name="Oliveira V.R."/>
            <person name="Pereira H.A."/>
            <person name="Rossi A."/>
            <person name="Sena J.A.D."/>
            <person name="Silva C."/>
            <person name="de Souza R.F."/>
            <person name="Spinola L.A.F."/>
            <person name="Takita M.A."/>
            <person name="Tamura R.E."/>
            <person name="Teixeira E.C."/>
            <person name="Tezza R.I.D."/>
            <person name="Trindade dos Santos M."/>
            <person name="Truffi D."/>
            <person name="Tsai S.M."/>
            <person name="White F.F."/>
            <person name="Setubal J.C."/>
            <person name="Kitajima J.P."/>
        </authorList>
    </citation>
    <scope>NUCLEOTIDE SEQUENCE [LARGE SCALE GENOMIC DNA]</scope>
    <source>
        <strain>306</strain>
    </source>
</reference>
<protein>
    <recommendedName>
        <fullName evidence="1">Co-chaperonin GroES</fullName>
    </recommendedName>
    <alternativeName>
        <fullName evidence="1">10 kDa chaperonin</fullName>
    </alternativeName>
    <alternativeName>
        <fullName evidence="1">Chaperonin-10</fullName>
        <shortName evidence="1">Cpn10</shortName>
    </alternativeName>
</protein>
<evidence type="ECO:0000255" key="1">
    <source>
        <dbReference type="HAMAP-Rule" id="MF_00580"/>
    </source>
</evidence>
<organism>
    <name type="scientific">Xanthomonas axonopodis pv. citri (strain 306)</name>
    <dbReference type="NCBI Taxonomy" id="190486"/>
    <lineage>
        <taxon>Bacteria</taxon>
        <taxon>Pseudomonadati</taxon>
        <taxon>Pseudomonadota</taxon>
        <taxon>Gammaproteobacteria</taxon>
        <taxon>Lysobacterales</taxon>
        <taxon>Lysobacteraceae</taxon>
        <taxon>Xanthomonas</taxon>
    </lineage>
</organism>